<protein>
    <recommendedName>
        <fullName evidence="1">Thymidylate kinase</fullName>
        <ecNumber evidence="1">2.7.4.9</ecNumber>
    </recommendedName>
    <alternativeName>
        <fullName evidence="1">dTMP kinase</fullName>
    </alternativeName>
</protein>
<comment type="function">
    <text evidence="1">Phosphorylation of dTMP to form dTDP in both de novo and salvage pathways of dTTP synthesis.</text>
</comment>
<comment type="catalytic activity">
    <reaction evidence="1">
        <text>dTMP + ATP = dTDP + ADP</text>
        <dbReference type="Rhea" id="RHEA:13517"/>
        <dbReference type="ChEBI" id="CHEBI:30616"/>
        <dbReference type="ChEBI" id="CHEBI:58369"/>
        <dbReference type="ChEBI" id="CHEBI:63528"/>
        <dbReference type="ChEBI" id="CHEBI:456216"/>
        <dbReference type="EC" id="2.7.4.9"/>
    </reaction>
</comment>
<comment type="similarity">
    <text evidence="1">Belongs to the thymidylate kinase family.</text>
</comment>
<keyword id="KW-0067">ATP-binding</keyword>
<keyword id="KW-0418">Kinase</keyword>
<keyword id="KW-0545">Nucleotide biosynthesis</keyword>
<keyword id="KW-0547">Nucleotide-binding</keyword>
<keyword id="KW-0808">Transferase</keyword>
<accession>Q6FZU8</accession>
<organism>
    <name type="scientific">Bartonella quintana (strain Toulouse)</name>
    <name type="common">Rochalimaea quintana</name>
    <dbReference type="NCBI Taxonomy" id="283165"/>
    <lineage>
        <taxon>Bacteria</taxon>
        <taxon>Pseudomonadati</taxon>
        <taxon>Pseudomonadota</taxon>
        <taxon>Alphaproteobacteria</taxon>
        <taxon>Hyphomicrobiales</taxon>
        <taxon>Bartonellaceae</taxon>
        <taxon>Bartonella</taxon>
    </lineage>
</organism>
<name>KTHY_BARQU</name>
<sequence length="214" mass="23860">MSGYFITFEGGEGVGKTTQISLLAQYLRNQGYDVLTTREPGGTVGAEAIRHILLSGQAQNYGPLIEVILLTAARIDHITEVIAPSLQKGKIVLCDRFIDSTRVYQGLNNTVGSSVLSVLEYVALNGIMPCLTFLLDIPARCGMERANLRRKKAETIDYFEKDELKIQEQRRQAFLQLAKQEPHRFRVIDATGAMEVIAQQIKNICHQVILDQVP</sequence>
<evidence type="ECO:0000255" key="1">
    <source>
        <dbReference type="HAMAP-Rule" id="MF_00165"/>
    </source>
</evidence>
<reference key="1">
    <citation type="journal article" date="2004" name="Proc. Natl. Acad. Sci. U.S.A.">
        <title>The louse-borne human pathogen Bartonella quintana is a genomic derivative of the zoonotic agent Bartonella henselae.</title>
        <authorList>
            <person name="Alsmark U.C.M."/>
            <person name="Frank A.C."/>
            <person name="Karlberg E.O."/>
            <person name="Legault B.-A."/>
            <person name="Ardell D.H."/>
            <person name="Canbaeck B."/>
            <person name="Eriksson A.-S."/>
            <person name="Naeslund A.K."/>
            <person name="Handley S.A."/>
            <person name="Huvet M."/>
            <person name="La Scola B."/>
            <person name="Holmberg M."/>
            <person name="Andersson S.G.E."/>
        </authorList>
    </citation>
    <scope>NUCLEOTIDE SEQUENCE [LARGE SCALE GENOMIC DNA]</scope>
    <source>
        <strain>Toulouse</strain>
    </source>
</reference>
<gene>
    <name evidence="1" type="primary">tmk</name>
    <name type="ordered locus">BQ06110</name>
</gene>
<proteinExistence type="inferred from homology"/>
<dbReference type="EC" id="2.7.4.9" evidence="1"/>
<dbReference type="EMBL" id="BX897700">
    <property type="protein sequence ID" value="CAF26103.1"/>
    <property type="molecule type" value="Genomic_DNA"/>
</dbReference>
<dbReference type="RefSeq" id="WP_011179369.1">
    <property type="nucleotide sequence ID" value="NC_005955.1"/>
</dbReference>
<dbReference type="SMR" id="Q6FZU8"/>
<dbReference type="KEGG" id="bqu:BQ06110"/>
<dbReference type="eggNOG" id="COG0125">
    <property type="taxonomic scope" value="Bacteria"/>
</dbReference>
<dbReference type="HOGENOM" id="CLU_049131_0_0_5"/>
<dbReference type="OrthoDB" id="9774907at2"/>
<dbReference type="Proteomes" id="UP000000597">
    <property type="component" value="Chromosome"/>
</dbReference>
<dbReference type="GO" id="GO:0005829">
    <property type="term" value="C:cytosol"/>
    <property type="evidence" value="ECO:0007669"/>
    <property type="project" value="TreeGrafter"/>
</dbReference>
<dbReference type="GO" id="GO:0005524">
    <property type="term" value="F:ATP binding"/>
    <property type="evidence" value="ECO:0007669"/>
    <property type="project" value="UniProtKB-UniRule"/>
</dbReference>
<dbReference type="GO" id="GO:0004798">
    <property type="term" value="F:dTMP kinase activity"/>
    <property type="evidence" value="ECO:0007669"/>
    <property type="project" value="UniProtKB-UniRule"/>
</dbReference>
<dbReference type="GO" id="GO:0006233">
    <property type="term" value="P:dTDP biosynthetic process"/>
    <property type="evidence" value="ECO:0007669"/>
    <property type="project" value="InterPro"/>
</dbReference>
<dbReference type="GO" id="GO:0006235">
    <property type="term" value="P:dTTP biosynthetic process"/>
    <property type="evidence" value="ECO:0007669"/>
    <property type="project" value="UniProtKB-UniRule"/>
</dbReference>
<dbReference type="GO" id="GO:0006227">
    <property type="term" value="P:dUDP biosynthetic process"/>
    <property type="evidence" value="ECO:0007669"/>
    <property type="project" value="TreeGrafter"/>
</dbReference>
<dbReference type="CDD" id="cd01672">
    <property type="entry name" value="TMPK"/>
    <property type="match status" value="1"/>
</dbReference>
<dbReference type="FunFam" id="3.40.50.300:FF:000225">
    <property type="entry name" value="Thymidylate kinase"/>
    <property type="match status" value="1"/>
</dbReference>
<dbReference type="Gene3D" id="3.40.50.300">
    <property type="entry name" value="P-loop containing nucleotide triphosphate hydrolases"/>
    <property type="match status" value="1"/>
</dbReference>
<dbReference type="HAMAP" id="MF_00165">
    <property type="entry name" value="Thymidylate_kinase"/>
    <property type="match status" value="1"/>
</dbReference>
<dbReference type="InterPro" id="IPR027417">
    <property type="entry name" value="P-loop_NTPase"/>
</dbReference>
<dbReference type="InterPro" id="IPR039430">
    <property type="entry name" value="Thymidylate_kin-like_dom"/>
</dbReference>
<dbReference type="InterPro" id="IPR018095">
    <property type="entry name" value="Thymidylate_kin_CS"/>
</dbReference>
<dbReference type="InterPro" id="IPR018094">
    <property type="entry name" value="Thymidylate_kinase"/>
</dbReference>
<dbReference type="NCBIfam" id="TIGR00041">
    <property type="entry name" value="DTMP_kinase"/>
    <property type="match status" value="1"/>
</dbReference>
<dbReference type="PANTHER" id="PTHR10344">
    <property type="entry name" value="THYMIDYLATE KINASE"/>
    <property type="match status" value="1"/>
</dbReference>
<dbReference type="PANTHER" id="PTHR10344:SF4">
    <property type="entry name" value="UMP-CMP KINASE 2, MITOCHONDRIAL"/>
    <property type="match status" value="1"/>
</dbReference>
<dbReference type="Pfam" id="PF02223">
    <property type="entry name" value="Thymidylate_kin"/>
    <property type="match status" value="1"/>
</dbReference>
<dbReference type="SUPFAM" id="SSF52540">
    <property type="entry name" value="P-loop containing nucleoside triphosphate hydrolases"/>
    <property type="match status" value="1"/>
</dbReference>
<dbReference type="PROSITE" id="PS01331">
    <property type="entry name" value="THYMIDYLATE_KINASE"/>
    <property type="match status" value="1"/>
</dbReference>
<feature type="chain" id="PRO_0000155240" description="Thymidylate kinase">
    <location>
        <begin position="1"/>
        <end position="214"/>
    </location>
</feature>
<feature type="binding site" evidence="1">
    <location>
        <begin position="10"/>
        <end position="17"/>
    </location>
    <ligand>
        <name>ATP</name>
        <dbReference type="ChEBI" id="CHEBI:30616"/>
    </ligand>
</feature>